<proteinExistence type="inferred from homology"/>
<accession>B8I0Q1</accession>
<organism>
    <name type="scientific">Ruminiclostridium cellulolyticum (strain ATCC 35319 / DSM 5812 / JCM 6584 / H10)</name>
    <name type="common">Clostridium cellulolyticum</name>
    <dbReference type="NCBI Taxonomy" id="394503"/>
    <lineage>
        <taxon>Bacteria</taxon>
        <taxon>Bacillati</taxon>
        <taxon>Bacillota</taxon>
        <taxon>Clostridia</taxon>
        <taxon>Eubacteriales</taxon>
        <taxon>Oscillospiraceae</taxon>
        <taxon>Ruminiclostridium</taxon>
    </lineage>
</organism>
<feature type="chain" id="PRO_1000148477" description="Cobalt-precorrin-5B C(1)-methyltransferase">
    <location>
        <begin position="1"/>
        <end position="384"/>
    </location>
</feature>
<dbReference type="EC" id="2.1.1.195" evidence="1"/>
<dbReference type="EMBL" id="CP001348">
    <property type="protein sequence ID" value="ACL75626.1"/>
    <property type="molecule type" value="Genomic_DNA"/>
</dbReference>
<dbReference type="RefSeq" id="WP_015924775.1">
    <property type="nucleotide sequence ID" value="NC_011898.1"/>
</dbReference>
<dbReference type="SMR" id="B8I0Q1"/>
<dbReference type="STRING" id="394503.Ccel_1270"/>
<dbReference type="KEGG" id="cce:Ccel_1270"/>
<dbReference type="eggNOG" id="COG1903">
    <property type="taxonomic scope" value="Bacteria"/>
</dbReference>
<dbReference type="HOGENOM" id="CLU_041273_1_0_9"/>
<dbReference type="OrthoDB" id="6439987at2"/>
<dbReference type="UniPathway" id="UPA00148">
    <property type="reaction ID" value="UER00227"/>
</dbReference>
<dbReference type="Proteomes" id="UP000001349">
    <property type="component" value="Chromosome"/>
</dbReference>
<dbReference type="GO" id="GO:0043780">
    <property type="term" value="F:cobalt-precorrin-5B C1-methyltransferase activity"/>
    <property type="evidence" value="ECO:0007669"/>
    <property type="project" value="RHEA"/>
</dbReference>
<dbReference type="GO" id="GO:0019251">
    <property type="term" value="P:anaerobic cobalamin biosynthetic process"/>
    <property type="evidence" value="ECO:0007669"/>
    <property type="project" value="UniProtKB-UniRule"/>
</dbReference>
<dbReference type="GO" id="GO:0032259">
    <property type="term" value="P:methylation"/>
    <property type="evidence" value="ECO:0007669"/>
    <property type="project" value="UniProtKB-KW"/>
</dbReference>
<dbReference type="Gene3D" id="3.30.2110.10">
    <property type="entry name" value="CbiD-like"/>
    <property type="match status" value="1"/>
</dbReference>
<dbReference type="HAMAP" id="MF_00787">
    <property type="entry name" value="CbiD"/>
    <property type="match status" value="1"/>
</dbReference>
<dbReference type="InterPro" id="IPR002748">
    <property type="entry name" value="CbiD"/>
</dbReference>
<dbReference type="InterPro" id="IPR036074">
    <property type="entry name" value="CbiD_sf"/>
</dbReference>
<dbReference type="NCBIfam" id="TIGR00312">
    <property type="entry name" value="cbiD"/>
    <property type="match status" value="1"/>
</dbReference>
<dbReference type="PANTHER" id="PTHR35863">
    <property type="entry name" value="COBALT-PRECORRIN-5B C(1)-METHYLTRANSFERASE"/>
    <property type="match status" value="1"/>
</dbReference>
<dbReference type="PANTHER" id="PTHR35863:SF1">
    <property type="entry name" value="COBALT-PRECORRIN-5B C(1)-METHYLTRANSFERASE"/>
    <property type="match status" value="1"/>
</dbReference>
<dbReference type="Pfam" id="PF01888">
    <property type="entry name" value="CbiD"/>
    <property type="match status" value="1"/>
</dbReference>
<dbReference type="PIRSF" id="PIRSF026782">
    <property type="entry name" value="CbiD"/>
    <property type="match status" value="1"/>
</dbReference>
<dbReference type="SUPFAM" id="SSF111342">
    <property type="entry name" value="CbiD-like"/>
    <property type="match status" value="1"/>
</dbReference>
<name>CBID_RUMCH</name>
<sequence>MEEFIVKNGKRLKCGYTTGSCAAAAVKAGAVMLLGRTTIDEVIVNTPKGIRLNLQIGDIYKQKECISCSVKKDAGDDPDVTDGIKIFAKVEKLEKEILIEGGSGIGRVTKSGLQCAVGEAAINPVPRQMIQEVLKEVSETYGYKGGFSVVISAEDGEEIAKKTFNPRLGITGGISILGTSGIVEPMSEKALIETIHREINVKITQNNEYFLVTPGNFGRDFALKRFGLDIDKGVKCSNYIGETIDYAVYNNIKNILLIGHAGKLCKIAGGIMNTHSRTADGRCEIFAAHAALCGASKECINNIMQSMTTDEINVILREEGLEDAVNISILEKIKFHLNYRANYKARIEVVMFTDLNRELQDRVYYHTSGAVDMIKELCKESDKG</sequence>
<gene>
    <name evidence="1" type="primary">cbiD</name>
    <name type="ordered locus">Ccel_1270</name>
</gene>
<evidence type="ECO:0000255" key="1">
    <source>
        <dbReference type="HAMAP-Rule" id="MF_00787"/>
    </source>
</evidence>
<comment type="function">
    <text evidence="1">Catalyzes the methylation of C-1 in cobalt-precorrin-5B to form cobalt-precorrin-6A.</text>
</comment>
<comment type="catalytic activity">
    <reaction evidence="1">
        <text>Co-precorrin-5B + S-adenosyl-L-methionine = Co-precorrin-6A + S-adenosyl-L-homocysteine</text>
        <dbReference type="Rhea" id="RHEA:26285"/>
        <dbReference type="ChEBI" id="CHEBI:57856"/>
        <dbReference type="ChEBI" id="CHEBI:59789"/>
        <dbReference type="ChEBI" id="CHEBI:60063"/>
        <dbReference type="ChEBI" id="CHEBI:60064"/>
        <dbReference type="EC" id="2.1.1.195"/>
    </reaction>
</comment>
<comment type="pathway">
    <text evidence="1">Cofactor biosynthesis; adenosylcobalamin biosynthesis; cob(II)yrinate a,c-diamide from sirohydrochlorin (anaerobic route): step 6/10.</text>
</comment>
<comment type="similarity">
    <text evidence="1">Belongs to the CbiD family.</text>
</comment>
<reference key="1">
    <citation type="submission" date="2009-01" db="EMBL/GenBank/DDBJ databases">
        <title>Complete sequence of Clostridium cellulolyticum H10.</title>
        <authorList>
            <consortium name="US DOE Joint Genome Institute"/>
            <person name="Lucas S."/>
            <person name="Copeland A."/>
            <person name="Lapidus A."/>
            <person name="Glavina del Rio T."/>
            <person name="Dalin E."/>
            <person name="Tice H."/>
            <person name="Bruce D."/>
            <person name="Goodwin L."/>
            <person name="Pitluck S."/>
            <person name="Chertkov O."/>
            <person name="Saunders E."/>
            <person name="Brettin T."/>
            <person name="Detter J.C."/>
            <person name="Han C."/>
            <person name="Larimer F."/>
            <person name="Land M."/>
            <person name="Hauser L."/>
            <person name="Kyrpides N."/>
            <person name="Ivanova N."/>
            <person name="Zhou J."/>
            <person name="Richardson P."/>
        </authorList>
    </citation>
    <scope>NUCLEOTIDE SEQUENCE [LARGE SCALE GENOMIC DNA]</scope>
    <source>
        <strain>ATCC 35319 / DSM 5812 / JCM 6584 / H10</strain>
    </source>
</reference>
<protein>
    <recommendedName>
        <fullName evidence="1">Cobalt-precorrin-5B C(1)-methyltransferase</fullName>
        <ecNumber evidence="1">2.1.1.195</ecNumber>
    </recommendedName>
    <alternativeName>
        <fullName evidence="1">Cobalt-precorrin-6A synthase</fullName>
    </alternativeName>
</protein>
<keyword id="KW-0169">Cobalamin biosynthesis</keyword>
<keyword id="KW-0489">Methyltransferase</keyword>
<keyword id="KW-1185">Reference proteome</keyword>
<keyword id="KW-0949">S-adenosyl-L-methionine</keyword>
<keyword id="KW-0808">Transferase</keyword>